<comment type="function">
    <text evidence="1">Catalyzes the acyloin condensation reaction between C atoms 2 and 3 of pyruvate and glyceraldehyde 3-phosphate to yield 1-deoxy-D-xylulose-5-phosphate (DXP).</text>
</comment>
<comment type="catalytic activity">
    <reaction evidence="1">
        <text>D-glyceraldehyde 3-phosphate + pyruvate + H(+) = 1-deoxy-D-xylulose 5-phosphate + CO2</text>
        <dbReference type="Rhea" id="RHEA:12605"/>
        <dbReference type="ChEBI" id="CHEBI:15361"/>
        <dbReference type="ChEBI" id="CHEBI:15378"/>
        <dbReference type="ChEBI" id="CHEBI:16526"/>
        <dbReference type="ChEBI" id="CHEBI:57792"/>
        <dbReference type="ChEBI" id="CHEBI:59776"/>
        <dbReference type="EC" id="2.2.1.7"/>
    </reaction>
</comment>
<comment type="cofactor">
    <cofactor evidence="1">
        <name>Mg(2+)</name>
        <dbReference type="ChEBI" id="CHEBI:18420"/>
    </cofactor>
    <text evidence="1">Binds 1 Mg(2+) ion per subunit.</text>
</comment>
<comment type="cofactor">
    <cofactor evidence="1">
        <name>thiamine diphosphate</name>
        <dbReference type="ChEBI" id="CHEBI:58937"/>
    </cofactor>
    <text evidence="1">Binds 1 thiamine pyrophosphate per subunit.</text>
</comment>
<comment type="pathway">
    <text evidence="1">Metabolic intermediate biosynthesis; 1-deoxy-D-xylulose 5-phosphate biosynthesis; 1-deoxy-D-xylulose 5-phosphate from D-glyceraldehyde 3-phosphate and pyruvate: step 1/1.</text>
</comment>
<comment type="subunit">
    <text evidence="1">Homodimer.</text>
</comment>
<comment type="similarity">
    <text evidence="1">Belongs to the transketolase family. DXPS subfamily.</text>
</comment>
<evidence type="ECO:0000255" key="1">
    <source>
        <dbReference type="HAMAP-Rule" id="MF_00315"/>
    </source>
</evidence>
<sequence>MTLDISKYPTLALANTPDELRSLPKEVLPKLCDELRTYLLNSVSQSSGHLASGLGTVELTVALHYVYHTPFDHLIWDVGHQAYPHKILTGRRDQMPTIRQKDGLHPFPWREESEYDTLSVGHSSTSISAALGMAICAGKEGKDRKVVSVIGDGAITAGMAFEAMNHAGDVHPDMLVVLNDNEMSISENVGALNNHLAQVLSGSLYTSIREGGKKVLSGIPPIKELVRRTEEHLKGMVVPGTLFEELGFNYIGPVDGHDVLELIKTLKNMRELKGPQFLHVMTKKGKGYAPAEKDPIGYHGVPKFDPSHHSLPKSSNTKPTFSKIFGDFLCDMAAQDPKLMAITPAMREGSGMVRFSKEYPSQYFDVAIAEQHAVTLATGMAIAGYHPIVAIYSTFLQRGYDQLIHDVAIMNLPVMFAIDRAGIVGADGQTHQGAFDLSYMRCIPNMLIMAPADENECRQMLYTGHQHQGPSAVRYPRGNGMGVELESSFTALEIGKGRLMRESTACEGEKVAILSFGTLLPNALQAAEKLNATVADMRFVKPLDEALIKQLAQTHDVLVTLEENAIAGGAGAGVIEFLMKEKQLKPVLNLGLPDQFIVQGTQEEMHAELGLDGAGIERAIRDYLAK</sequence>
<gene>
    <name evidence="1" type="primary">dxs</name>
    <name type="ordered locus">VCM66_0846</name>
</gene>
<dbReference type="EC" id="2.2.1.7" evidence="1"/>
<dbReference type="EMBL" id="CP001233">
    <property type="protein sequence ID" value="ACP05165.1"/>
    <property type="molecule type" value="Genomic_DNA"/>
</dbReference>
<dbReference type="RefSeq" id="WP_000171170.1">
    <property type="nucleotide sequence ID" value="NC_012578.1"/>
</dbReference>
<dbReference type="SMR" id="C3LTD9"/>
<dbReference type="KEGG" id="vcm:VCM66_0846"/>
<dbReference type="HOGENOM" id="CLU_009227_1_4_6"/>
<dbReference type="UniPathway" id="UPA00064">
    <property type="reaction ID" value="UER00091"/>
</dbReference>
<dbReference type="Proteomes" id="UP000001217">
    <property type="component" value="Chromosome I"/>
</dbReference>
<dbReference type="GO" id="GO:0005829">
    <property type="term" value="C:cytosol"/>
    <property type="evidence" value="ECO:0007669"/>
    <property type="project" value="TreeGrafter"/>
</dbReference>
<dbReference type="GO" id="GO:0008661">
    <property type="term" value="F:1-deoxy-D-xylulose-5-phosphate synthase activity"/>
    <property type="evidence" value="ECO:0007669"/>
    <property type="project" value="UniProtKB-UniRule"/>
</dbReference>
<dbReference type="GO" id="GO:0000287">
    <property type="term" value="F:magnesium ion binding"/>
    <property type="evidence" value="ECO:0007669"/>
    <property type="project" value="UniProtKB-UniRule"/>
</dbReference>
<dbReference type="GO" id="GO:0030976">
    <property type="term" value="F:thiamine pyrophosphate binding"/>
    <property type="evidence" value="ECO:0007669"/>
    <property type="project" value="UniProtKB-UniRule"/>
</dbReference>
<dbReference type="GO" id="GO:0052865">
    <property type="term" value="P:1-deoxy-D-xylulose 5-phosphate biosynthetic process"/>
    <property type="evidence" value="ECO:0007669"/>
    <property type="project" value="UniProtKB-UniPathway"/>
</dbReference>
<dbReference type="GO" id="GO:0019288">
    <property type="term" value="P:isopentenyl diphosphate biosynthetic process, methylerythritol 4-phosphate pathway"/>
    <property type="evidence" value="ECO:0007669"/>
    <property type="project" value="TreeGrafter"/>
</dbReference>
<dbReference type="GO" id="GO:0016114">
    <property type="term" value="P:terpenoid biosynthetic process"/>
    <property type="evidence" value="ECO:0007669"/>
    <property type="project" value="UniProtKB-UniRule"/>
</dbReference>
<dbReference type="GO" id="GO:0009228">
    <property type="term" value="P:thiamine biosynthetic process"/>
    <property type="evidence" value="ECO:0007669"/>
    <property type="project" value="UniProtKB-UniRule"/>
</dbReference>
<dbReference type="CDD" id="cd02007">
    <property type="entry name" value="TPP_DXS"/>
    <property type="match status" value="1"/>
</dbReference>
<dbReference type="CDD" id="cd07033">
    <property type="entry name" value="TPP_PYR_DXS_TK_like"/>
    <property type="match status" value="1"/>
</dbReference>
<dbReference type="FunFam" id="3.40.50.920:FF:000002">
    <property type="entry name" value="1-deoxy-D-xylulose-5-phosphate synthase"/>
    <property type="match status" value="1"/>
</dbReference>
<dbReference type="FunFam" id="3.40.50.970:FF:000005">
    <property type="entry name" value="1-deoxy-D-xylulose-5-phosphate synthase"/>
    <property type="match status" value="1"/>
</dbReference>
<dbReference type="Gene3D" id="3.40.50.920">
    <property type="match status" value="1"/>
</dbReference>
<dbReference type="Gene3D" id="3.40.50.970">
    <property type="match status" value="2"/>
</dbReference>
<dbReference type="HAMAP" id="MF_00315">
    <property type="entry name" value="DXP_synth"/>
    <property type="match status" value="1"/>
</dbReference>
<dbReference type="InterPro" id="IPR005477">
    <property type="entry name" value="Dxylulose-5-P_synthase"/>
</dbReference>
<dbReference type="InterPro" id="IPR029061">
    <property type="entry name" value="THDP-binding"/>
</dbReference>
<dbReference type="InterPro" id="IPR009014">
    <property type="entry name" value="Transketo_C/PFOR_II"/>
</dbReference>
<dbReference type="InterPro" id="IPR005475">
    <property type="entry name" value="Transketolase-like_Pyr-bd"/>
</dbReference>
<dbReference type="InterPro" id="IPR020826">
    <property type="entry name" value="Transketolase_BS"/>
</dbReference>
<dbReference type="InterPro" id="IPR033248">
    <property type="entry name" value="Transketolase_C"/>
</dbReference>
<dbReference type="InterPro" id="IPR049557">
    <property type="entry name" value="Transketolase_CS"/>
</dbReference>
<dbReference type="NCBIfam" id="TIGR00204">
    <property type="entry name" value="dxs"/>
    <property type="match status" value="1"/>
</dbReference>
<dbReference type="NCBIfam" id="NF003933">
    <property type="entry name" value="PRK05444.2-2"/>
    <property type="match status" value="1"/>
</dbReference>
<dbReference type="PANTHER" id="PTHR43322">
    <property type="entry name" value="1-D-DEOXYXYLULOSE 5-PHOSPHATE SYNTHASE-RELATED"/>
    <property type="match status" value="1"/>
</dbReference>
<dbReference type="PANTHER" id="PTHR43322:SF5">
    <property type="entry name" value="1-DEOXY-D-XYLULOSE-5-PHOSPHATE SYNTHASE, CHLOROPLASTIC"/>
    <property type="match status" value="1"/>
</dbReference>
<dbReference type="Pfam" id="PF13292">
    <property type="entry name" value="DXP_synthase_N"/>
    <property type="match status" value="1"/>
</dbReference>
<dbReference type="Pfam" id="PF02779">
    <property type="entry name" value="Transket_pyr"/>
    <property type="match status" value="1"/>
</dbReference>
<dbReference type="Pfam" id="PF02780">
    <property type="entry name" value="Transketolase_C"/>
    <property type="match status" value="1"/>
</dbReference>
<dbReference type="SMART" id="SM00861">
    <property type="entry name" value="Transket_pyr"/>
    <property type="match status" value="1"/>
</dbReference>
<dbReference type="SUPFAM" id="SSF52518">
    <property type="entry name" value="Thiamin diphosphate-binding fold (THDP-binding)"/>
    <property type="match status" value="2"/>
</dbReference>
<dbReference type="SUPFAM" id="SSF52922">
    <property type="entry name" value="TK C-terminal domain-like"/>
    <property type="match status" value="1"/>
</dbReference>
<dbReference type="PROSITE" id="PS00801">
    <property type="entry name" value="TRANSKETOLASE_1"/>
    <property type="match status" value="1"/>
</dbReference>
<dbReference type="PROSITE" id="PS00802">
    <property type="entry name" value="TRANSKETOLASE_2"/>
    <property type="match status" value="1"/>
</dbReference>
<feature type="chain" id="PRO_1000132947" description="1-deoxy-D-xylulose-5-phosphate synthase">
    <location>
        <begin position="1"/>
        <end position="626"/>
    </location>
</feature>
<feature type="binding site" evidence="1">
    <location>
        <position position="80"/>
    </location>
    <ligand>
        <name>thiamine diphosphate</name>
        <dbReference type="ChEBI" id="CHEBI:58937"/>
    </ligand>
</feature>
<feature type="binding site" evidence="1">
    <location>
        <begin position="121"/>
        <end position="123"/>
    </location>
    <ligand>
        <name>thiamine diphosphate</name>
        <dbReference type="ChEBI" id="CHEBI:58937"/>
    </ligand>
</feature>
<feature type="binding site" evidence="1">
    <location>
        <position position="152"/>
    </location>
    <ligand>
        <name>Mg(2+)</name>
        <dbReference type="ChEBI" id="CHEBI:18420"/>
    </ligand>
</feature>
<feature type="binding site" evidence="1">
    <location>
        <begin position="153"/>
        <end position="154"/>
    </location>
    <ligand>
        <name>thiamine diphosphate</name>
        <dbReference type="ChEBI" id="CHEBI:58937"/>
    </ligand>
</feature>
<feature type="binding site" evidence="1">
    <location>
        <position position="181"/>
    </location>
    <ligand>
        <name>Mg(2+)</name>
        <dbReference type="ChEBI" id="CHEBI:18420"/>
    </ligand>
</feature>
<feature type="binding site" evidence="1">
    <location>
        <position position="181"/>
    </location>
    <ligand>
        <name>thiamine diphosphate</name>
        <dbReference type="ChEBI" id="CHEBI:58937"/>
    </ligand>
</feature>
<feature type="binding site" evidence="1">
    <location>
        <position position="288"/>
    </location>
    <ligand>
        <name>thiamine diphosphate</name>
        <dbReference type="ChEBI" id="CHEBI:58937"/>
    </ligand>
</feature>
<feature type="binding site" evidence="1">
    <location>
        <position position="370"/>
    </location>
    <ligand>
        <name>thiamine diphosphate</name>
        <dbReference type="ChEBI" id="CHEBI:58937"/>
    </ligand>
</feature>
<keyword id="KW-0414">Isoprene biosynthesis</keyword>
<keyword id="KW-0460">Magnesium</keyword>
<keyword id="KW-0479">Metal-binding</keyword>
<keyword id="KW-0784">Thiamine biosynthesis</keyword>
<keyword id="KW-0786">Thiamine pyrophosphate</keyword>
<keyword id="KW-0808">Transferase</keyword>
<name>DXS_VIBCM</name>
<proteinExistence type="inferred from homology"/>
<organism>
    <name type="scientific">Vibrio cholerae serotype O1 (strain M66-2)</name>
    <dbReference type="NCBI Taxonomy" id="579112"/>
    <lineage>
        <taxon>Bacteria</taxon>
        <taxon>Pseudomonadati</taxon>
        <taxon>Pseudomonadota</taxon>
        <taxon>Gammaproteobacteria</taxon>
        <taxon>Vibrionales</taxon>
        <taxon>Vibrionaceae</taxon>
        <taxon>Vibrio</taxon>
    </lineage>
</organism>
<accession>C3LTD9</accession>
<reference key="1">
    <citation type="journal article" date="2008" name="PLoS ONE">
        <title>A recalibrated molecular clock and independent origins for the cholera pandemic clones.</title>
        <authorList>
            <person name="Feng L."/>
            <person name="Reeves P.R."/>
            <person name="Lan R."/>
            <person name="Ren Y."/>
            <person name="Gao C."/>
            <person name="Zhou Z."/>
            <person name="Ren Y."/>
            <person name="Cheng J."/>
            <person name="Wang W."/>
            <person name="Wang J."/>
            <person name="Qian W."/>
            <person name="Li D."/>
            <person name="Wang L."/>
        </authorList>
    </citation>
    <scope>NUCLEOTIDE SEQUENCE [LARGE SCALE GENOMIC DNA]</scope>
    <source>
        <strain>M66-2</strain>
    </source>
</reference>
<protein>
    <recommendedName>
        <fullName evidence="1">1-deoxy-D-xylulose-5-phosphate synthase</fullName>
        <ecNumber evidence="1">2.2.1.7</ecNumber>
    </recommendedName>
    <alternativeName>
        <fullName evidence="1">1-deoxyxylulose-5-phosphate synthase</fullName>
        <shortName evidence="1">DXP synthase</shortName>
        <shortName evidence="1">DXPS</shortName>
    </alternativeName>
</protein>